<proteinExistence type="inferred from homology"/>
<feature type="chain" id="PRO_0000083186" description="Penicillin-binding protein 1B">
    <location>
        <begin position="1"/>
        <end position="741"/>
    </location>
</feature>
<feature type="topological domain" description="Cytoplasmic" evidence="3">
    <location>
        <begin position="1"/>
        <end position="12"/>
    </location>
</feature>
<feature type="transmembrane region" description="Helical; Signal-anchor for type II membrane protein" evidence="3">
    <location>
        <begin position="13"/>
        <end position="33"/>
    </location>
</feature>
<feature type="topological domain" description="Extracellular" evidence="3">
    <location>
        <begin position="34"/>
        <end position="741"/>
    </location>
</feature>
<feature type="region of interest" description="Transglycosylase">
    <location>
        <begin position="139"/>
        <end position="311"/>
    </location>
</feature>
<feature type="region of interest" description="Transpeptidase">
    <location>
        <begin position="395"/>
        <end position="687"/>
    </location>
</feature>
<feature type="active site" description="Proton donor; for transglycosylase activity" evidence="2">
    <location>
        <position position="177"/>
    </location>
</feature>
<feature type="active site" description="Acyl-ester intermediate; for transpeptidase activity" evidence="2">
    <location>
        <position position="454"/>
    </location>
</feature>
<comment type="function">
    <text evidence="1">Cell wall formation. Synthesis of cross-linked peptidoglycan from the lipid intermediates. The enzyme has a penicillin-insensitive transglycosylase N-terminal domain (formation of linear glycan strands) and a penicillin-sensitive transpeptidase C-terminal domain (cross-linking of the peptide subunits) (By similarity).</text>
</comment>
<comment type="catalytic activity">
    <reaction evidence="2">
        <text>[GlcNAc-(1-&gt;4)-Mur2Ac(oyl-L-Ala-gamma-D-Glu-L-Lys-D-Ala-D-Ala)](n)-di-trans,octa-cis-undecaprenyl diphosphate + beta-D-GlcNAc-(1-&gt;4)-Mur2Ac(oyl-L-Ala-gamma-D-Glu-L-Lys-D-Ala-D-Ala)-di-trans,octa-cis-undecaprenyl diphosphate = [GlcNAc-(1-&gt;4)-Mur2Ac(oyl-L-Ala-gamma-D-Glu-L-Lys-D-Ala-D-Ala)](n+1)-di-trans,octa-cis-undecaprenyl diphosphate + di-trans,octa-cis-undecaprenyl diphosphate + H(+)</text>
        <dbReference type="Rhea" id="RHEA:23708"/>
        <dbReference type="Rhea" id="RHEA-COMP:9602"/>
        <dbReference type="Rhea" id="RHEA-COMP:9603"/>
        <dbReference type="ChEBI" id="CHEBI:15378"/>
        <dbReference type="ChEBI" id="CHEBI:58405"/>
        <dbReference type="ChEBI" id="CHEBI:60033"/>
        <dbReference type="ChEBI" id="CHEBI:78435"/>
        <dbReference type="EC" id="2.4.99.28"/>
    </reaction>
</comment>
<comment type="catalytic activity">
    <reaction evidence="2">
        <text>Preferential cleavage: (Ac)2-L-Lys-D-Ala-|-D-Ala. Also transpeptidation of peptidyl-alanyl moieties that are N-acyl substituents of D-alanine.</text>
        <dbReference type="EC" id="3.4.16.4"/>
    </reaction>
</comment>
<comment type="pathway">
    <text>Cell wall biogenesis; peptidoglycan biosynthesis.</text>
</comment>
<comment type="subcellular location">
    <subcellularLocation>
        <location evidence="1">Cell membrane</location>
        <topology evidence="1">Single-pass type II membrane protein</topology>
    </subcellularLocation>
</comment>
<comment type="similarity">
    <text evidence="4">In the N-terminal section; belongs to the glycosyltransferase 51 family.</text>
</comment>
<comment type="similarity">
    <text evidence="4">In the C-terminal section; belongs to the transpeptidase family.</text>
</comment>
<protein>
    <recommendedName>
        <fullName>Penicillin-binding protein 1B</fullName>
        <shortName>PBP-1b</shortName>
        <shortName>PBP1b</shortName>
    </recommendedName>
    <alternativeName>
        <fullName>Murein polymerase</fullName>
    </alternativeName>
    <domain>
        <recommendedName>
            <fullName>Penicillin-insensitive transglycosylase</fullName>
            <ecNumber evidence="2">2.4.99.28</ecNumber>
        </recommendedName>
        <alternativeName>
            <fullName>Peptidoglycan TGase</fullName>
        </alternativeName>
        <alternativeName>
            <fullName>Peptidoglycan glycosyltransferase</fullName>
        </alternativeName>
    </domain>
    <domain>
        <recommendedName>
            <fullName>Penicillin-sensitive transpeptidase</fullName>
            <ecNumber evidence="2">3.4.16.4</ecNumber>
        </recommendedName>
        <alternativeName>
            <fullName>DD-transpeptidase</fullName>
        </alternativeName>
    </domain>
</protein>
<evidence type="ECO:0000250" key="1"/>
<evidence type="ECO:0000250" key="2">
    <source>
        <dbReference type="UniProtKB" id="P02919"/>
    </source>
</evidence>
<evidence type="ECO:0000255" key="3"/>
<evidence type="ECO:0000305" key="4"/>
<accession>Q89AR2</accession>
<name>PBPB_BUCBP</name>
<reference key="1">
    <citation type="journal article" date="2003" name="Proc. Natl. Acad. Sci. U.S.A.">
        <title>Reductive genome evolution in Buchnera aphidicola.</title>
        <authorList>
            <person name="van Ham R.C.H.J."/>
            <person name="Kamerbeek J."/>
            <person name="Palacios C."/>
            <person name="Rausell C."/>
            <person name="Abascal F."/>
            <person name="Bastolla U."/>
            <person name="Fernandez J.M."/>
            <person name="Jimenez L."/>
            <person name="Postigo M."/>
            <person name="Silva F.J."/>
            <person name="Tamames J."/>
            <person name="Viguera E."/>
            <person name="Latorre A."/>
            <person name="Valencia A."/>
            <person name="Moran F."/>
            <person name="Moya A."/>
        </authorList>
    </citation>
    <scope>NUCLEOTIDE SEQUENCE [LARGE SCALE GENOMIC DNA]</scope>
    <source>
        <strain>Bp</strain>
    </source>
</reference>
<sequence>MYPVNLKLSIKFLFYFFLYFLLIIIIYGVYLYFKINQVIHGKIWKFPISIYSRIVTLEPGNNYSKKDIIAILKSNRYKQVNFLTMPGEFLVKRNSLILIRRSFNFPEGFEDKISIKLLFDKNKLVRIVHLSNNRNFSILRLDPQLIAMIYSPKGEKRLFVSQKNYPKALIQTLLTIEDKCFYNHYGINFYSMFRAFFVNLISGHSIQGGSTLTQQLVKNLFLTNIRSLWRKINEIYMALILDFQYSKEKILELYLNEVYLGQDKNEQIRGFALASLYYFGRPINELRLDECALLVGMVKGASLYNPWNNPVLTLNRRNLVLYVLFKHKVINRTLYEKLKSKPLNIQSRGNIIWFRSAFVQIVEKEFQKKVGYYFQNFSGIKIFTTLDLISQIAAENAIRHGIQQLKKKYKLQDLEASMVIIDRFSGEIRGVLGSSNPNLLGYNRAIQAKRSIGSLSKPITYLAALSQPEYFRLNTWIPDTPIKIKMQNGKLWKPQNNNFEFVGKVMLIDALKNSMNVPIVHLSMKLGLKKIVQTWIQLGLSSNHIFKYPSIALGSINLTSMEVAKIFQVISSGGNKANIISIRSVLSENNKLIYHSFPQSKQVISAQASYLTLYAMQSVVSSGTAKHLGKFFKNMHLAGKTGTTNNLVDSWFVGIDGRQVVIVWIGRDNNKTTKCYGSTGAMKIYHNYLKLNNPKPLLLIPPRDVYFLNINKSGDFMCFRSYSKYFRAIPVWIRNHNIFCT</sequence>
<dbReference type="EC" id="2.4.99.28" evidence="2"/>
<dbReference type="EC" id="3.4.16.4" evidence="2"/>
<dbReference type="EMBL" id="AE016826">
    <property type="protein sequence ID" value="AAO26918.1"/>
    <property type="molecule type" value="Genomic_DNA"/>
</dbReference>
<dbReference type="RefSeq" id="WP_011091319.1">
    <property type="nucleotide sequence ID" value="NC_004545.1"/>
</dbReference>
<dbReference type="SMR" id="Q89AR2"/>
<dbReference type="STRING" id="224915.bbp_186"/>
<dbReference type="CAZy" id="GT51">
    <property type="family name" value="Glycosyltransferase Family 51"/>
</dbReference>
<dbReference type="KEGG" id="bab:bbp_186"/>
<dbReference type="eggNOG" id="COG0744">
    <property type="taxonomic scope" value="Bacteria"/>
</dbReference>
<dbReference type="HOGENOM" id="CLU_006354_2_7_6"/>
<dbReference type="OrthoDB" id="9766909at2"/>
<dbReference type="UniPathway" id="UPA00219"/>
<dbReference type="Proteomes" id="UP000000601">
    <property type="component" value="Chromosome"/>
</dbReference>
<dbReference type="GO" id="GO:0030288">
    <property type="term" value="C:outer membrane-bounded periplasmic space"/>
    <property type="evidence" value="ECO:0007669"/>
    <property type="project" value="TreeGrafter"/>
</dbReference>
<dbReference type="GO" id="GO:0009274">
    <property type="term" value="C:peptidoglycan-based cell wall"/>
    <property type="evidence" value="ECO:0007669"/>
    <property type="project" value="InterPro"/>
</dbReference>
<dbReference type="GO" id="GO:0005886">
    <property type="term" value="C:plasma membrane"/>
    <property type="evidence" value="ECO:0007669"/>
    <property type="project" value="UniProtKB-SubCell"/>
</dbReference>
<dbReference type="GO" id="GO:0008658">
    <property type="term" value="F:penicillin binding"/>
    <property type="evidence" value="ECO:0007669"/>
    <property type="project" value="InterPro"/>
</dbReference>
<dbReference type="GO" id="GO:0008955">
    <property type="term" value="F:peptidoglycan glycosyltransferase activity"/>
    <property type="evidence" value="ECO:0007669"/>
    <property type="project" value="InterPro"/>
</dbReference>
<dbReference type="GO" id="GO:0009002">
    <property type="term" value="F:serine-type D-Ala-D-Ala carboxypeptidase activity"/>
    <property type="evidence" value="ECO:0007669"/>
    <property type="project" value="UniProtKB-EC"/>
</dbReference>
<dbReference type="GO" id="GO:0071555">
    <property type="term" value="P:cell wall organization"/>
    <property type="evidence" value="ECO:0007669"/>
    <property type="project" value="UniProtKB-KW"/>
</dbReference>
<dbReference type="GO" id="GO:0009252">
    <property type="term" value="P:peptidoglycan biosynthetic process"/>
    <property type="evidence" value="ECO:0007669"/>
    <property type="project" value="UniProtKB-UniPathway"/>
</dbReference>
<dbReference type="GO" id="GO:0006508">
    <property type="term" value="P:proteolysis"/>
    <property type="evidence" value="ECO:0007669"/>
    <property type="project" value="UniProtKB-KW"/>
</dbReference>
<dbReference type="GO" id="GO:0008360">
    <property type="term" value="P:regulation of cell shape"/>
    <property type="evidence" value="ECO:0007669"/>
    <property type="project" value="UniProtKB-KW"/>
</dbReference>
<dbReference type="GO" id="GO:0046677">
    <property type="term" value="P:response to antibiotic"/>
    <property type="evidence" value="ECO:0007669"/>
    <property type="project" value="UniProtKB-KW"/>
</dbReference>
<dbReference type="FunFam" id="1.10.3810.10:FF:000002">
    <property type="entry name" value="Penicillin-binding protein 1B"/>
    <property type="match status" value="1"/>
</dbReference>
<dbReference type="Gene3D" id="1.10.3810.10">
    <property type="entry name" value="Biosynthetic peptidoglycan transglycosylase-like"/>
    <property type="match status" value="1"/>
</dbReference>
<dbReference type="Gene3D" id="3.40.710.10">
    <property type="entry name" value="DD-peptidase/beta-lactamase superfamily"/>
    <property type="match status" value="1"/>
</dbReference>
<dbReference type="Gene3D" id="3.30.2060.10">
    <property type="entry name" value="Penicillin-binding protein 1b domain"/>
    <property type="match status" value="1"/>
</dbReference>
<dbReference type="InterPro" id="IPR012338">
    <property type="entry name" value="Beta-lactam/transpept-like"/>
</dbReference>
<dbReference type="InterPro" id="IPR001264">
    <property type="entry name" value="Glyco_trans_51"/>
</dbReference>
<dbReference type="InterPro" id="IPR050396">
    <property type="entry name" value="Glycosyltr_51/Transpeptidase"/>
</dbReference>
<dbReference type="InterPro" id="IPR023346">
    <property type="entry name" value="Lysozyme-like_dom_sf"/>
</dbReference>
<dbReference type="InterPro" id="IPR011813">
    <property type="entry name" value="PBP_1b"/>
</dbReference>
<dbReference type="InterPro" id="IPR036950">
    <property type="entry name" value="PBP_transglycosylase"/>
</dbReference>
<dbReference type="InterPro" id="IPR001460">
    <property type="entry name" value="PCN-bd_Tpept"/>
</dbReference>
<dbReference type="InterPro" id="IPR028166">
    <property type="entry name" value="UB2H"/>
</dbReference>
<dbReference type="NCBIfam" id="TIGR02071">
    <property type="entry name" value="PBP_1b"/>
    <property type="match status" value="1"/>
</dbReference>
<dbReference type="NCBIfam" id="NF011423">
    <property type="entry name" value="PRK14850.1"/>
    <property type="match status" value="1"/>
</dbReference>
<dbReference type="PANTHER" id="PTHR32282">
    <property type="entry name" value="BINDING PROTEIN TRANSPEPTIDASE, PUTATIVE-RELATED"/>
    <property type="match status" value="1"/>
</dbReference>
<dbReference type="PANTHER" id="PTHR32282:SF11">
    <property type="entry name" value="PENICILLIN-BINDING PROTEIN 1B"/>
    <property type="match status" value="1"/>
</dbReference>
<dbReference type="Pfam" id="PF00912">
    <property type="entry name" value="Transgly"/>
    <property type="match status" value="1"/>
</dbReference>
<dbReference type="Pfam" id="PF00905">
    <property type="entry name" value="Transpeptidase"/>
    <property type="match status" value="1"/>
</dbReference>
<dbReference type="Pfam" id="PF14814">
    <property type="entry name" value="UB2H"/>
    <property type="match status" value="1"/>
</dbReference>
<dbReference type="PIRSF" id="PIRSF002799">
    <property type="entry name" value="PBP_1b"/>
    <property type="match status" value="1"/>
</dbReference>
<dbReference type="SUPFAM" id="SSF56601">
    <property type="entry name" value="beta-lactamase/transpeptidase-like"/>
    <property type="match status" value="1"/>
</dbReference>
<dbReference type="SUPFAM" id="SSF53955">
    <property type="entry name" value="Lysozyme-like"/>
    <property type="match status" value="1"/>
</dbReference>
<keyword id="KW-0046">Antibiotic resistance</keyword>
<keyword id="KW-0121">Carboxypeptidase</keyword>
<keyword id="KW-1003">Cell membrane</keyword>
<keyword id="KW-0133">Cell shape</keyword>
<keyword id="KW-0961">Cell wall biogenesis/degradation</keyword>
<keyword id="KW-0328">Glycosyltransferase</keyword>
<keyword id="KW-0378">Hydrolase</keyword>
<keyword id="KW-0472">Membrane</keyword>
<keyword id="KW-0511">Multifunctional enzyme</keyword>
<keyword id="KW-0573">Peptidoglycan synthesis</keyword>
<keyword id="KW-0645">Protease</keyword>
<keyword id="KW-1185">Reference proteome</keyword>
<keyword id="KW-0735">Signal-anchor</keyword>
<keyword id="KW-0808">Transferase</keyword>
<keyword id="KW-0812">Transmembrane</keyword>
<keyword id="KW-1133">Transmembrane helix</keyword>
<organism>
    <name type="scientific">Buchnera aphidicola subsp. Baizongia pistaciae (strain Bp)</name>
    <dbReference type="NCBI Taxonomy" id="224915"/>
    <lineage>
        <taxon>Bacteria</taxon>
        <taxon>Pseudomonadati</taxon>
        <taxon>Pseudomonadota</taxon>
        <taxon>Gammaproteobacteria</taxon>
        <taxon>Enterobacterales</taxon>
        <taxon>Erwiniaceae</taxon>
        <taxon>Buchnera</taxon>
    </lineage>
</organism>
<gene>
    <name type="primary">mrcB</name>
    <name type="ordered locus">bbp_186</name>
</gene>